<sequence length="572" mass="64892">MNLKALPAIEGDHNLKNYEETYRHFDWAEAEKHFSWHETGKLNAAYEAIDRHAESFRKNKVALYYKDAKRDEKYTFKEMKEESNRAGNVLRRYGNVEKGDRVFIFMPRSPELYFIMLGAIKIGAIAGPLFEAFMEGAVKDRLENSEAKVVVTTPELLERIPVDKLPHLQHVFVVGGEAESGTNIINYDEAAKQESTRLDIEWMDKKDGFLLHYTSGSTGTPKGVLHVHEAMIQQYQTGKWVLDLKEEDIYWCTADPGWVTGTVYGIFAPWLNGATNVIVGGRFSPESWYGTIEQLGVNVWYSAPTAFRMLMGAGDEMAAKYDLTSLRHVLSVGEPLNPEVIRWGHKVFNKRIHDTWWMTETGSQLICNYPCMDIKPGSMGKPIPGVEAAIVDNQGNELPPYRMGNLAIKKGWPSMMHTIWNNPEKYESYFMPGGWYVSGDSAYMDEEGYFWFQGRVDDVIMTSGERVGPFEVESKLVEHPAIAEAGVIGKPDPVRGEIIKAFIALREGFEPSDKLKEEIRLFVKQGLAAHAAPREIEFKDKLPKTRSGKIMRRVLKAWELNLPAGDLSTMED</sequence>
<reference key="1">
    <citation type="journal article" date="1993" name="Mol. Microbiol.">
        <title>Identification of genes involved in utilization of acetate and acetoin in Bacillus subtilis.</title>
        <authorList>
            <person name="Grundy F.J."/>
            <person name="Waters D.A."/>
            <person name="Takova T.Y."/>
            <person name="Henkin T.M."/>
        </authorList>
    </citation>
    <scope>NUCLEOTIDE SEQUENCE [GENOMIC DNA]</scope>
    <scope>FUNCTION IN SPORULATION</scope>
    <scope>DISRUPTION PHENOTYPE</scope>
    <source>
        <strain>168</strain>
    </source>
</reference>
<reference key="2">
    <citation type="journal article" date="1997" name="Microbiology">
        <title>Sequencing and functional annotation of the Bacillus subtilis genes in the 200 kb rrnB-dnaB region.</title>
        <authorList>
            <person name="Lapidus A."/>
            <person name="Galleron N."/>
            <person name="Sorokin A."/>
            <person name="Ehrlich S.D."/>
        </authorList>
    </citation>
    <scope>NUCLEOTIDE SEQUENCE [GENOMIC DNA]</scope>
    <source>
        <strain>168</strain>
    </source>
</reference>
<reference key="3">
    <citation type="journal article" date="1997" name="Nature">
        <title>The complete genome sequence of the Gram-positive bacterium Bacillus subtilis.</title>
        <authorList>
            <person name="Kunst F."/>
            <person name="Ogasawara N."/>
            <person name="Moszer I."/>
            <person name="Albertini A.M."/>
            <person name="Alloni G."/>
            <person name="Azevedo V."/>
            <person name="Bertero M.G."/>
            <person name="Bessieres P."/>
            <person name="Bolotin A."/>
            <person name="Borchert S."/>
            <person name="Borriss R."/>
            <person name="Boursier L."/>
            <person name="Brans A."/>
            <person name="Braun M."/>
            <person name="Brignell S.C."/>
            <person name="Bron S."/>
            <person name="Brouillet S."/>
            <person name="Bruschi C.V."/>
            <person name="Caldwell B."/>
            <person name="Capuano V."/>
            <person name="Carter N.M."/>
            <person name="Choi S.-K."/>
            <person name="Codani J.-J."/>
            <person name="Connerton I.F."/>
            <person name="Cummings N.J."/>
            <person name="Daniel R.A."/>
            <person name="Denizot F."/>
            <person name="Devine K.M."/>
            <person name="Duesterhoeft A."/>
            <person name="Ehrlich S.D."/>
            <person name="Emmerson P.T."/>
            <person name="Entian K.-D."/>
            <person name="Errington J."/>
            <person name="Fabret C."/>
            <person name="Ferrari E."/>
            <person name="Foulger D."/>
            <person name="Fritz C."/>
            <person name="Fujita M."/>
            <person name="Fujita Y."/>
            <person name="Fuma S."/>
            <person name="Galizzi A."/>
            <person name="Galleron N."/>
            <person name="Ghim S.-Y."/>
            <person name="Glaser P."/>
            <person name="Goffeau A."/>
            <person name="Golightly E.J."/>
            <person name="Grandi G."/>
            <person name="Guiseppi G."/>
            <person name="Guy B.J."/>
            <person name="Haga K."/>
            <person name="Haiech J."/>
            <person name="Harwood C.R."/>
            <person name="Henaut A."/>
            <person name="Hilbert H."/>
            <person name="Holsappel S."/>
            <person name="Hosono S."/>
            <person name="Hullo M.-F."/>
            <person name="Itaya M."/>
            <person name="Jones L.-M."/>
            <person name="Joris B."/>
            <person name="Karamata D."/>
            <person name="Kasahara Y."/>
            <person name="Klaerr-Blanchard M."/>
            <person name="Klein C."/>
            <person name="Kobayashi Y."/>
            <person name="Koetter P."/>
            <person name="Koningstein G."/>
            <person name="Krogh S."/>
            <person name="Kumano M."/>
            <person name="Kurita K."/>
            <person name="Lapidus A."/>
            <person name="Lardinois S."/>
            <person name="Lauber J."/>
            <person name="Lazarevic V."/>
            <person name="Lee S.-M."/>
            <person name="Levine A."/>
            <person name="Liu H."/>
            <person name="Masuda S."/>
            <person name="Mauel C."/>
            <person name="Medigue C."/>
            <person name="Medina N."/>
            <person name="Mellado R.P."/>
            <person name="Mizuno M."/>
            <person name="Moestl D."/>
            <person name="Nakai S."/>
            <person name="Noback M."/>
            <person name="Noone D."/>
            <person name="O'Reilly M."/>
            <person name="Ogawa K."/>
            <person name="Ogiwara A."/>
            <person name="Oudega B."/>
            <person name="Park S.-H."/>
            <person name="Parro V."/>
            <person name="Pohl T.M."/>
            <person name="Portetelle D."/>
            <person name="Porwollik S."/>
            <person name="Prescott A.M."/>
            <person name="Presecan E."/>
            <person name="Pujic P."/>
            <person name="Purnelle B."/>
            <person name="Rapoport G."/>
            <person name="Rey M."/>
            <person name="Reynolds S."/>
            <person name="Rieger M."/>
            <person name="Rivolta C."/>
            <person name="Rocha E."/>
            <person name="Roche B."/>
            <person name="Rose M."/>
            <person name="Sadaie Y."/>
            <person name="Sato T."/>
            <person name="Scanlan E."/>
            <person name="Schleich S."/>
            <person name="Schroeter R."/>
            <person name="Scoffone F."/>
            <person name="Sekiguchi J."/>
            <person name="Sekowska A."/>
            <person name="Seror S.J."/>
            <person name="Serror P."/>
            <person name="Shin B.-S."/>
            <person name="Soldo B."/>
            <person name="Sorokin A."/>
            <person name="Tacconi E."/>
            <person name="Takagi T."/>
            <person name="Takahashi H."/>
            <person name="Takemaru K."/>
            <person name="Takeuchi M."/>
            <person name="Tamakoshi A."/>
            <person name="Tanaka T."/>
            <person name="Terpstra P."/>
            <person name="Tognoni A."/>
            <person name="Tosato V."/>
            <person name="Uchiyama S."/>
            <person name="Vandenbol M."/>
            <person name="Vannier F."/>
            <person name="Vassarotti A."/>
            <person name="Viari A."/>
            <person name="Wambutt R."/>
            <person name="Wedler E."/>
            <person name="Wedler H."/>
            <person name="Weitzenegger T."/>
            <person name="Winters P."/>
            <person name="Wipat A."/>
            <person name="Yamamoto H."/>
            <person name="Yamane K."/>
            <person name="Yasumoto K."/>
            <person name="Yata K."/>
            <person name="Yoshida K."/>
            <person name="Yoshikawa H.-F."/>
            <person name="Zumstein E."/>
            <person name="Yoshikawa H."/>
            <person name="Danchin A."/>
        </authorList>
    </citation>
    <scope>NUCLEOTIDE SEQUENCE [LARGE SCALE GENOMIC DNA]</scope>
    <source>
        <strain>168</strain>
    </source>
</reference>
<reference key="4">
    <citation type="journal article" date="2013" name="Mol. Microbiol.">
        <title>Flotillins functionally organize the bacterial membrane.</title>
        <authorList>
            <person name="Bach J.N."/>
            <person name="Bramkamp M."/>
        </authorList>
    </citation>
    <scope>INTERACTION WITH FLOT</scope>
    <scope>SUBCELLULAR LOCATION</scope>
    <source>
        <strain>168</strain>
    </source>
</reference>
<organism>
    <name type="scientific">Bacillus subtilis (strain 168)</name>
    <dbReference type="NCBI Taxonomy" id="224308"/>
    <lineage>
        <taxon>Bacteria</taxon>
        <taxon>Bacillati</taxon>
        <taxon>Bacillota</taxon>
        <taxon>Bacilli</taxon>
        <taxon>Bacillales</taxon>
        <taxon>Bacillaceae</taxon>
        <taxon>Bacillus</taxon>
    </lineage>
</organism>
<keyword id="KW-0007">Acetylation</keyword>
<keyword id="KW-0067">ATP-binding</keyword>
<keyword id="KW-1003">Cell membrane</keyword>
<keyword id="KW-0436">Ligase</keyword>
<keyword id="KW-0460">Magnesium</keyword>
<keyword id="KW-0472">Membrane</keyword>
<keyword id="KW-0479">Metal-binding</keyword>
<keyword id="KW-0547">Nucleotide-binding</keyword>
<keyword id="KW-1185">Reference proteome</keyword>
<comment type="function">
    <text evidence="1 3">Catalyzes the conversion of acetate into acetyl-CoA (AcCoA), an essential intermediate at the junction of anabolic and catabolic pathways. AcsA undergoes a two-step reaction. In the first half reaction, AcsA combines acetate with ATP to form acetyl-adenylate (AcAMP) intermediate. In the second half reaction, it can then transfer the acetyl group from AcAMP to the sulfhydryl group of CoA, forming the product AcCoA (By similarity). Has a role in growth and sporulation on acetate.</text>
</comment>
<comment type="catalytic activity">
    <reaction>
        <text>acetate + ATP + CoA = acetyl-CoA + AMP + diphosphate</text>
        <dbReference type="Rhea" id="RHEA:23176"/>
        <dbReference type="ChEBI" id="CHEBI:30089"/>
        <dbReference type="ChEBI" id="CHEBI:30616"/>
        <dbReference type="ChEBI" id="CHEBI:33019"/>
        <dbReference type="ChEBI" id="CHEBI:57287"/>
        <dbReference type="ChEBI" id="CHEBI:57288"/>
        <dbReference type="ChEBI" id="CHEBI:456215"/>
        <dbReference type="EC" id="6.2.1.1"/>
    </reaction>
</comment>
<comment type="cofactor">
    <cofactor evidence="1">
        <name>Mg(2+)</name>
        <dbReference type="ChEBI" id="CHEBI:18420"/>
    </cofactor>
</comment>
<comment type="subunit">
    <text evidence="2">Interacts with FloT.</text>
</comment>
<comment type="subcellular location">
    <subcellularLocation>
        <location evidence="2">Cell membrane</location>
    </subcellularLocation>
    <subcellularLocation>
        <location evidence="2">Membrane raft</location>
    </subcellularLocation>
    <text evidence="2">Present in detergent-resistant membrane (DRM) fractions that may be equivalent to eukaryotic membrane rafts; these rafts include proteins involved in signaling, molecule trafficking and protein secretion.</text>
</comment>
<comment type="PTM">
    <text evidence="1">Acetylated. Deacetylation by the SIR2-homolog deacetylase activates the enzyme (By similarity).</text>
</comment>
<comment type="disruption phenotype">
    <text evidence="3">Disruption of this gene induces a loss of the ability to utilize acetate as a carbon source for growth or sporulation.</text>
</comment>
<comment type="similarity">
    <text evidence="4">Belongs to the ATP-dependent AMP-binding enzyme family.</text>
</comment>
<feature type="chain" id="PRO_0000208354" description="Acetyl-coenzyme A synthetase">
    <location>
        <begin position="1"/>
        <end position="572"/>
    </location>
</feature>
<feature type="binding site" evidence="1">
    <location>
        <position position="260"/>
    </location>
    <ligand>
        <name>CoA</name>
        <dbReference type="ChEBI" id="CHEBI:57287"/>
    </ligand>
</feature>
<feature type="binding site" evidence="1">
    <location>
        <begin position="333"/>
        <end position="335"/>
    </location>
    <ligand>
        <name>ATP</name>
        <dbReference type="ChEBI" id="CHEBI:30616"/>
    </ligand>
</feature>
<feature type="binding site" evidence="1">
    <location>
        <begin position="354"/>
        <end position="359"/>
    </location>
    <ligand>
        <name>ATP</name>
        <dbReference type="ChEBI" id="CHEBI:30616"/>
    </ligand>
</feature>
<feature type="binding site" evidence="1">
    <location>
        <position position="440"/>
    </location>
    <ligand>
        <name>ATP</name>
        <dbReference type="ChEBI" id="CHEBI:30616"/>
    </ligand>
</feature>
<feature type="binding site" evidence="1">
    <location>
        <position position="455"/>
    </location>
    <ligand>
        <name>ATP</name>
        <dbReference type="ChEBI" id="CHEBI:30616"/>
    </ligand>
</feature>
<feature type="binding site" evidence="1">
    <location>
        <position position="463"/>
    </location>
    <ligand>
        <name>CoA</name>
        <dbReference type="ChEBI" id="CHEBI:57287"/>
    </ligand>
</feature>
<feature type="binding site" evidence="1">
    <location>
        <position position="466"/>
    </location>
    <ligand>
        <name>ATP</name>
        <dbReference type="ChEBI" id="CHEBI:30616"/>
    </ligand>
</feature>
<feature type="binding site" evidence="1">
    <location>
        <position position="477"/>
    </location>
    <ligand>
        <name>Mg(2+)</name>
        <dbReference type="ChEBI" id="CHEBI:18420"/>
    </ligand>
</feature>
<feature type="binding site" evidence="1">
    <location>
        <position position="479"/>
    </location>
    <ligand>
        <name>Mg(2+)</name>
        <dbReference type="ChEBI" id="CHEBI:18420"/>
    </ligand>
</feature>
<feature type="binding site" evidence="1">
    <location>
        <position position="482"/>
    </location>
    <ligand>
        <name>Mg(2+)</name>
        <dbReference type="ChEBI" id="CHEBI:18420"/>
    </ligand>
</feature>
<feature type="binding site">
    <location>
        <position position="524"/>
    </location>
    <ligand>
        <name>CoA</name>
        <dbReference type="ChEBI" id="CHEBI:57287"/>
    </ligand>
</feature>
<feature type="modified residue" description="N6-acetyllysine" evidence="1">
    <location>
        <position position="549"/>
    </location>
</feature>
<dbReference type="EC" id="6.2.1.1"/>
<dbReference type="EMBL" id="L17309">
    <property type="protein sequence ID" value="AAA68287.1"/>
    <property type="molecule type" value="Genomic_DNA"/>
</dbReference>
<dbReference type="EMBL" id="AF008220">
    <property type="protein sequence ID" value="AAC00302.1"/>
    <property type="molecule type" value="Genomic_DNA"/>
</dbReference>
<dbReference type="EMBL" id="AL009126">
    <property type="protein sequence ID" value="CAB14946.1"/>
    <property type="molecule type" value="Genomic_DNA"/>
</dbReference>
<dbReference type="PIR" id="S39646">
    <property type="entry name" value="S39646"/>
</dbReference>
<dbReference type="RefSeq" id="NP_390846.1">
    <property type="nucleotide sequence ID" value="NC_000964.3"/>
</dbReference>
<dbReference type="RefSeq" id="WP_004399030.1">
    <property type="nucleotide sequence ID" value="NZ_OZ025638.1"/>
</dbReference>
<dbReference type="SMR" id="P39062"/>
<dbReference type="FunCoup" id="P39062">
    <property type="interactions" value="655"/>
</dbReference>
<dbReference type="STRING" id="224308.BSU29680"/>
<dbReference type="PaxDb" id="224308-BSU29680"/>
<dbReference type="EnsemblBacteria" id="CAB14946">
    <property type="protein sequence ID" value="CAB14946"/>
    <property type="gene ID" value="BSU_29680"/>
</dbReference>
<dbReference type="GeneID" id="937324"/>
<dbReference type="KEGG" id="bsu:BSU29680"/>
<dbReference type="PATRIC" id="fig|224308.179.peg.3226"/>
<dbReference type="eggNOG" id="COG0365">
    <property type="taxonomic scope" value="Bacteria"/>
</dbReference>
<dbReference type="InParanoid" id="P39062"/>
<dbReference type="OrthoDB" id="9778383at2"/>
<dbReference type="PhylomeDB" id="P39062"/>
<dbReference type="BioCyc" id="BSUB:BSU29680-MONOMER"/>
<dbReference type="SABIO-RK" id="P39062"/>
<dbReference type="Proteomes" id="UP000001570">
    <property type="component" value="Chromosome"/>
</dbReference>
<dbReference type="GO" id="GO:0005829">
    <property type="term" value="C:cytosol"/>
    <property type="evidence" value="ECO:0000318"/>
    <property type="project" value="GO_Central"/>
</dbReference>
<dbReference type="GO" id="GO:0045121">
    <property type="term" value="C:membrane raft"/>
    <property type="evidence" value="ECO:0007669"/>
    <property type="project" value="UniProtKB-SubCell"/>
</dbReference>
<dbReference type="GO" id="GO:0005886">
    <property type="term" value="C:plasma membrane"/>
    <property type="evidence" value="ECO:0007669"/>
    <property type="project" value="UniProtKB-SubCell"/>
</dbReference>
<dbReference type="GO" id="GO:0003987">
    <property type="term" value="F:acetate-CoA ligase activity"/>
    <property type="evidence" value="ECO:0000318"/>
    <property type="project" value="GO_Central"/>
</dbReference>
<dbReference type="GO" id="GO:0005524">
    <property type="term" value="F:ATP binding"/>
    <property type="evidence" value="ECO:0007669"/>
    <property type="project" value="UniProtKB-KW"/>
</dbReference>
<dbReference type="GO" id="GO:0046872">
    <property type="term" value="F:metal ion binding"/>
    <property type="evidence" value="ECO:0007669"/>
    <property type="project" value="UniProtKB-KW"/>
</dbReference>
<dbReference type="GO" id="GO:0006085">
    <property type="term" value="P:acetyl-CoA biosynthetic process"/>
    <property type="evidence" value="ECO:0000318"/>
    <property type="project" value="GO_Central"/>
</dbReference>
<dbReference type="CDD" id="cd05969">
    <property type="entry name" value="MACS_like_4"/>
    <property type="match status" value="1"/>
</dbReference>
<dbReference type="FunFam" id="3.30.300.30:FF:000005">
    <property type="entry name" value="Acyl-coenzyme A synthetase ACSM5, mitochondrial"/>
    <property type="match status" value="1"/>
</dbReference>
<dbReference type="Gene3D" id="3.30.300.30">
    <property type="match status" value="1"/>
</dbReference>
<dbReference type="Gene3D" id="3.40.50.12780">
    <property type="entry name" value="N-terminal domain of ligase-like"/>
    <property type="match status" value="1"/>
</dbReference>
<dbReference type="InterPro" id="IPR025110">
    <property type="entry name" value="AMP-bd_C"/>
</dbReference>
<dbReference type="InterPro" id="IPR045851">
    <property type="entry name" value="AMP-bd_C_sf"/>
</dbReference>
<dbReference type="InterPro" id="IPR020845">
    <property type="entry name" value="AMP-binding_CS"/>
</dbReference>
<dbReference type="InterPro" id="IPR000873">
    <property type="entry name" value="AMP-dep_synth/lig_dom"/>
</dbReference>
<dbReference type="InterPro" id="IPR042099">
    <property type="entry name" value="ANL_N_sf"/>
</dbReference>
<dbReference type="NCBIfam" id="NF003313">
    <property type="entry name" value="PRK04319.1"/>
    <property type="match status" value="1"/>
</dbReference>
<dbReference type="PANTHER" id="PTHR24095">
    <property type="entry name" value="ACETYL-COENZYME A SYNTHETASE"/>
    <property type="match status" value="1"/>
</dbReference>
<dbReference type="PANTHER" id="PTHR24095:SF14">
    <property type="entry name" value="ACETYL-COENZYME A SYNTHETASE 1"/>
    <property type="match status" value="1"/>
</dbReference>
<dbReference type="Pfam" id="PF00501">
    <property type="entry name" value="AMP-binding"/>
    <property type="match status" value="1"/>
</dbReference>
<dbReference type="Pfam" id="PF13193">
    <property type="entry name" value="AMP-binding_C"/>
    <property type="match status" value="1"/>
</dbReference>
<dbReference type="SUPFAM" id="SSF56801">
    <property type="entry name" value="Acetyl-CoA synthetase-like"/>
    <property type="match status" value="1"/>
</dbReference>
<dbReference type="PROSITE" id="PS00455">
    <property type="entry name" value="AMP_BINDING"/>
    <property type="match status" value="1"/>
</dbReference>
<protein>
    <recommendedName>
        <fullName>Acetyl-coenzyme A synthetase</fullName>
        <shortName>AcCoA synthetase</shortName>
        <shortName>Acs</shortName>
        <ecNumber>6.2.1.1</ecNumber>
    </recommendedName>
    <alternativeName>
        <fullName>Acetate--CoA ligase</fullName>
    </alternativeName>
    <alternativeName>
        <fullName>Acyl-activating enzyme</fullName>
    </alternativeName>
</protein>
<accession>P39062</accession>
<gene>
    <name type="primary">acsA</name>
    <name type="ordered locus">BSU29680</name>
</gene>
<name>ACSA_BACSU</name>
<evidence type="ECO:0000250" key="1"/>
<evidence type="ECO:0000269" key="2">
    <source>
    </source>
</evidence>
<evidence type="ECO:0000269" key="3">
    <source>
    </source>
</evidence>
<evidence type="ECO:0000305" key="4"/>
<proteinExistence type="evidence at protein level"/>